<name>YAJC_BRUA2</name>
<comment type="function">
    <text evidence="1">The SecYEG-SecDF-YajC-YidC holo-translocon (HTL) protein secretase/insertase is a supercomplex required for protein secretion, insertion of proteins into membranes, and assembly of membrane protein complexes. While the SecYEG complex is essential for assembly of a number of proteins and complexes, the SecDF-YajC-YidC subcomplex facilitates these functions.</text>
</comment>
<comment type="subunit">
    <text evidence="1">Part of the SecDF-YidC-YajC translocase complex. The SecDF-YidC-YajC translocase forms a supercomplex with SecYEG, called the holo-translocon (HTL).</text>
</comment>
<comment type="subcellular location">
    <subcellularLocation>
        <location evidence="1">Cell inner membrane</location>
        <topology evidence="1">Single-pass membrane protein</topology>
    </subcellularLocation>
</comment>
<comment type="similarity">
    <text evidence="3">Belongs to the YajC family.</text>
</comment>
<feature type="chain" id="PRO_0000097023" description="Sec translocon accessory complex subunit YajC">
    <location>
        <begin position="1"/>
        <end position="113"/>
    </location>
</feature>
<feature type="transmembrane region" description="Helical" evidence="2">
    <location>
        <begin position="18"/>
        <end position="38"/>
    </location>
</feature>
<protein>
    <recommendedName>
        <fullName>Sec translocon accessory complex subunit YajC</fullName>
    </recommendedName>
    <alternativeName>
        <fullName>Immunogenic membrane protein YajC</fullName>
    </alternativeName>
</protein>
<accession>Q2YNM1</accession>
<accession>P0A4Q3</accession>
<accession>Q57DL7</accession>
<accession>Q9ZG87</accession>
<sequence>MFVTPAFAQASGSVVGPDMLMSILPFILIFVIMYFLIIRPQRTQMKKRQEMLNSVRRGDTVVTGGGIVGKVLKVVDDNELELEIADGVRIRVVRATLMDVRVKGEPVADNKNK</sequence>
<keyword id="KW-0997">Cell inner membrane</keyword>
<keyword id="KW-1003">Cell membrane</keyword>
<keyword id="KW-0472">Membrane</keyword>
<keyword id="KW-0653">Protein transport</keyword>
<keyword id="KW-1185">Reference proteome</keyword>
<keyword id="KW-0811">Translocation</keyword>
<keyword id="KW-0812">Transmembrane</keyword>
<keyword id="KW-1133">Transmembrane helix</keyword>
<keyword id="KW-0813">Transport</keyword>
<proteinExistence type="inferred from homology"/>
<dbReference type="EMBL" id="AF085217">
    <property type="protein sequence ID" value="AAC83690.1"/>
    <property type="molecule type" value="Genomic_DNA"/>
</dbReference>
<dbReference type="EMBL" id="AM040264">
    <property type="protein sequence ID" value="CAJ10865.1"/>
    <property type="molecule type" value="Genomic_DNA"/>
</dbReference>
<dbReference type="RefSeq" id="WP_002964021.1">
    <property type="nucleotide sequence ID" value="NZ_KN046823.1"/>
</dbReference>
<dbReference type="SMR" id="Q2YNM1"/>
<dbReference type="STRING" id="359391.BAB1_0909"/>
<dbReference type="GeneID" id="93016732"/>
<dbReference type="KEGG" id="bmf:BAB1_0909"/>
<dbReference type="PATRIC" id="fig|359391.11.peg.3219"/>
<dbReference type="HOGENOM" id="CLU_116157_2_0_5"/>
<dbReference type="PhylomeDB" id="Q2YNM1"/>
<dbReference type="Proteomes" id="UP000002719">
    <property type="component" value="Chromosome I"/>
</dbReference>
<dbReference type="GO" id="GO:0005886">
    <property type="term" value="C:plasma membrane"/>
    <property type="evidence" value="ECO:0007669"/>
    <property type="project" value="UniProtKB-SubCell"/>
</dbReference>
<dbReference type="GO" id="GO:0015031">
    <property type="term" value="P:protein transport"/>
    <property type="evidence" value="ECO:0007669"/>
    <property type="project" value="UniProtKB-KW"/>
</dbReference>
<dbReference type="InterPro" id="IPR003849">
    <property type="entry name" value="Preprotein_translocase_YajC"/>
</dbReference>
<dbReference type="NCBIfam" id="TIGR00739">
    <property type="entry name" value="yajC"/>
    <property type="match status" value="1"/>
</dbReference>
<dbReference type="PANTHER" id="PTHR33909">
    <property type="entry name" value="SEC TRANSLOCON ACCESSORY COMPLEX SUBUNIT YAJC"/>
    <property type="match status" value="1"/>
</dbReference>
<dbReference type="PANTHER" id="PTHR33909:SF1">
    <property type="entry name" value="SEC TRANSLOCON ACCESSORY COMPLEX SUBUNIT YAJC"/>
    <property type="match status" value="1"/>
</dbReference>
<dbReference type="Pfam" id="PF02699">
    <property type="entry name" value="YajC"/>
    <property type="match status" value="1"/>
</dbReference>
<dbReference type="PRINTS" id="PR01853">
    <property type="entry name" value="YAJCTRNLCASE"/>
</dbReference>
<dbReference type="SMART" id="SM01323">
    <property type="entry name" value="YajC"/>
    <property type="match status" value="1"/>
</dbReference>
<gene>
    <name type="primary">yajC</name>
    <name type="ordered locus">BAB1_0909</name>
</gene>
<organism>
    <name type="scientific">Brucella abortus (strain 2308)</name>
    <dbReference type="NCBI Taxonomy" id="359391"/>
    <lineage>
        <taxon>Bacteria</taxon>
        <taxon>Pseudomonadati</taxon>
        <taxon>Pseudomonadota</taxon>
        <taxon>Alphaproteobacteria</taxon>
        <taxon>Hyphomicrobiales</taxon>
        <taxon>Brucellaceae</taxon>
        <taxon>Brucella/Ochrobactrum group</taxon>
        <taxon>Brucella</taxon>
    </lineage>
</organism>
<reference key="1">
    <citation type="journal article" date="1998" name="Infect. Immun.">
        <title>Cloning and sequencing of yajC and secD homologs of Brucella abortus and demonstration of immune responses to YajC in mice vaccinated with B. abortus RB51.</title>
        <authorList>
            <person name="Vemulapalli R."/>
            <person name="Duncan A.J."/>
            <person name="Boyle S.M."/>
            <person name="Sriranganathan N."/>
            <person name="Toth T.E."/>
            <person name="Schurig G.G."/>
        </authorList>
    </citation>
    <scope>NUCLEOTIDE SEQUENCE [GENOMIC DNA]</scope>
</reference>
<reference key="2">
    <citation type="journal article" date="2005" name="Infect. Immun.">
        <title>Whole-genome analyses of speciation events in pathogenic Brucellae.</title>
        <authorList>
            <person name="Chain P.S."/>
            <person name="Comerci D.J."/>
            <person name="Tolmasky M.E."/>
            <person name="Larimer F.W."/>
            <person name="Malfatti S.A."/>
            <person name="Vergez L.M."/>
            <person name="Aguero F."/>
            <person name="Land M.L."/>
            <person name="Ugalde R.A."/>
            <person name="Garcia E."/>
        </authorList>
    </citation>
    <scope>NUCLEOTIDE SEQUENCE [LARGE SCALE GENOMIC DNA]</scope>
    <source>
        <strain>2308</strain>
    </source>
</reference>
<evidence type="ECO:0000250" key="1">
    <source>
        <dbReference type="UniProtKB" id="P0ADZ7"/>
    </source>
</evidence>
<evidence type="ECO:0000255" key="2"/>
<evidence type="ECO:0000305" key="3"/>